<accession>Q83P81</accession>
<reference key="1">
    <citation type="journal article" date="2002" name="Nucleic Acids Res.">
        <title>Genome sequence of Shigella flexneri 2a: insights into pathogenicity through comparison with genomes of Escherichia coli K12 and O157.</title>
        <authorList>
            <person name="Jin Q."/>
            <person name="Yuan Z."/>
            <person name="Xu J."/>
            <person name="Wang Y."/>
            <person name="Shen Y."/>
            <person name="Lu W."/>
            <person name="Wang J."/>
            <person name="Liu H."/>
            <person name="Yang J."/>
            <person name="Yang F."/>
            <person name="Zhang X."/>
            <person name="Zhang J."/>
            <person name="Yang G."/>
            <person name="Wu H."/>
            <person name="Qu D."/>
            <person name="Dong J."/>
            <person name="Sun L."/>
            <person name="Xue Y."/>
            <person name="Zhao A."/>
            <person name="Gao Y."/>
            <person name="Zhu J."/>
            <person name="Kan B."/>
            <person name="Ding K."/>
            <person name="Chen S."/>
            <person name="Cheng H."/>
            <person name="Yao Z."/>
            <person name="He B."/>
            <person name="Chen R."/>
            <person name="Ma D."/>
            <person name="Qiang B."/>
            <person name="Wen Y."/>
            <person name="Hou Y."/>
            <person name="Yu J."/>
        </authorList>
    </citation>
    <scope>NUCLEOTIDE SEQUENCE [LARGE SCALE GENOMIC DNA]</scope>
    <source>
        <strain>301 / Serotype 2a</strain>
    </source>
</reference>
<reference key="2">
    <citation type="journal article" date="2003" name="Infect. Immun.">
        <title>Complete genome sequence and comparative genomics of Shigella flexneri serotype 2a strain 2457T.</title>
        <authorList>
            <person name="Wei J."/>
            <person name="Goldberg M.B."/>
            <person name="Burland V."/>
            <person name="Venkatesan M.M."/>
            <person name="Deng W."/>
            <person name="Fournier G."/>
            <person name="Mayhew G.F."/>
            <person name="Plunkett G. III"/>
            <person name="Rose D.J."/>
            <person name="Darling A."/>
            <person name="Mau B."/>
            <person name="Perna N.T."/>
            <person name="Payne S.M."/>
            <person name="Runyen-Janecky L.J."/>
            <person name="Zhou S."/>
            <person name="Schwartz D.C."/>
            <person name="Blattner F.R."/>
        </authorList>
    </citation>
    <scope>NUCLEOTIDE SEQUENCE [LARGE SCALE GENOMIC DNA]</scope>
    <source>
        <strain>ATCC 700930 / 2457T / Serotype 2a</strain>
    </source>
</reference>
<proteinExistence type="inferred from homology"/>
<dbReference type="EMBL" id="AE005674">
    <property type="protein sequence ID" value="AAN45593.2"/>
    <property type="molecule type" value="Genomic_DNA"/>
</dbReference>
<dbReference type="EMBL" id="AE014073">
    <property type="protein sequence ID" value="AAP18606.1"/>
    <property type="molecule type" value="Genomic_DNA"/>
</dbReference>
<dbReference type="RefSeq" id="NP_709886.2">
    <property type="nucleotide sequence ID" value="NC_004337.2"/>
</dbReference>
<dbReference type="RefSeq" id="WP_011069599.1">
    <property type="nucleotide sequence ID" value="NZ_CP123365.1"/>
</dbReference>
<dbReference type="BMRB" id="Q83P81"/>
<dbReference type="SMR" id="Q83P81"/>
<dbReference type="STRING" id="198214.SF4172"/>
<dbReference type="PaxDb" id="198214-SF4172"/>
<dbReference type="GeneID" id="1023460"/>
<dbReference type="KEGG" id="sfl:SF4172"/>
<dbReference type="KEGG" id="sfx:S3559"/>
<dbReference type="PATRIC" id="fig|198214.7.peg.4922"/>
<dbReference type="HOGENOM" id="CLU_016047_20_0_6"/>
<dbReference type="Proteomes" id="UP000001006">
    <property type="component" value="Chromosome"/>
</dbReference>
<dbReference type="Proteomes" id="UP000002673">
    <property type="component" value="Chromosome"/>
</dbReference>
<dbReference type="GO" id="GO:1990060">
    <property type="term" value="C:maltose transport complex"/>
    <property type="evidence" value="ECO:0007669"/>
    <property type="project" value="TreeGrafter"/>
</dbReference>
<dbReference type="GO" id="GO:0015423">
    <property type="term" value="F:ABC-type maltose transporter activity"/>
    <property type="evidence" value="ECO:0007669"/>
    <property type="project" value="TreeGrafter"/>
</dbReference>
<dbReference type="GO" id="GO:0042956">
    <property type="term" value="P:maltodextrin transmembrane transport"/>
    <property type="evidence" value="ECO:0007669"/>
    <property type="project" value="TreeGrafter"/>
</dbReference>
<dbReference type="CDD" id="cd06261">
    <property type="entry name" value="TM_PBP2"/>
    <property type="match status" value="1"/>
</dbReference>
<dbReference type="FunFam" id="1.10.3720.10:FF:000030">
    <property type="entry name" value="Maltose ABC transporter permease MalF"/>
    <property type="match status" value="1"/>
</dbReference>
<dbReference type="FunFam" id="1.20.58.370:FF:000001">
    <property type="entry name" value="Maltose ABC transporter permease MalF"/>
    <property type="match status" value="1"/>
</dbReference>
<dbReference type="FunFam" id="2.40.430.10:FF:000001">
    <property type="entry name" value="Maltose ABC transporter permease MalF"/>
    <property type="match status" value="1"/>
</dbReference>
<dbReference type="Gene3D" id="2.40.430.10">
    <property type="entry name" value="D-maltodextrin-binding protein, MBP"/>
    <property type="match status" value="1"/>
</dbReference>
<dbReference type="Gene3D" id="1.20.58.370">
    <property type="entry name" value="MalF N-terminal region-like"/>
    <property type="match status" value="1"/>
</dbReference>
<dbReference type="Gene3D" id="3.10.650.10">
    <property type="entry name" value="MalF N-terminal region-like"/>
    <property type="match status" value="1"/>
</dbReference>
<dbReference type="Gene3D" id="1.10.3720.10">
    <property type="entry name" value="MetI-like"/>
    <property type="match status" value="1"/>
</dbReference>
<dbReference type="InterPro" id="IPR035277">
    <property type="entry name" value="MalF_N"/>
</dbReference>
<dbReference type="InterPro" id="IPR048464">
    <property type="entry name" value="MalF_N_TM"/>
</dbReference>
<dbReference type="InterPro" id="IPR029345">
    <property type="entry name" value="MalF_P2"/>
</dbReference>
<dbReference type="InterPro" id="IPR047103">
    <property type="entry name" value="MalF_P2_sf"/>
</dbReference>
<dbReference type="InterPro" id="IPR000515">
    <property type="entry name" value="MetI-like"/>
</dbReference>
<dbReference type="InterPro" id="IPR035906">
    <property type="entry name" value="MetI-like_sf"/>
</dbReference>
<dbReference type="NCBIfam" id="NF008232">
    <property type="entry name" value="PRK10999.1"/>
    <property type="match status" value="1"/>
</dbReference>
<dbReference type="PANTHER" id="PTHR47314">
    <property type="entry name" value="MALTOSE/MALTODEXTRIN TRANSPORT SYSTEM PERMEASE PROTEIN MALF"/>
    <property type="match status" value="1"/>
</dbReference>
<dbReference type="PANTHER" id="PTHR47314:SF1">
    <property type="entry name" value="MALTOSE_MALTODEXTRIN TRANSPORT SYSTEM PERMEASE PROTEIN MALF"/>
    <property type="match status" value="1"/>
</dbReference>
<dbReference type="Pfam" id="PF00528">
    <property type="entry name" value="BPD_transp_1"/>
    <property type="match status" value="1"/>
</dbReference>
<dbReference type="Pfam" id="PF20872">
    <property type="entry name" value="MalF_N_TM"/>
    <property type="match status" value="1"/>
</dbReference>
<dbReference type="Pfam" id="PF14785">
    <property type="entry name" value="MalF_P2"/>
    <property type="match status" value="1"/>
</dbReference>
<dbReference type="SUPFAM" id="SSF160964">
    <property type="entry name" value="MalF N-terminal region-like"/>
    <property type="match status" value="1"/>
</dbReference>
<dbReference type="SUPFAM" id="SSF161098">
    <property type="entry name" value="MetI-like"/>
    <property type="match status" value="1"/>
</dbReference>
<dbReference type="PROSITE" id="PS50928">
    <property type="entry name" value="ABC_TM1"/>
    <property type="match status" value="1"/>
</dbReference>
<organism>
    <name type="scientific">Shigella flexneri</name>
    <dbReference type="NCBI Taxonomy" id="623"/>
    <lineage>
        <taxon>Bacteria</taxon>
        <taxon>Pseudomonadati</taxon>
        <taxon>Pseudomonadota</taxon>
        <taxon>Gammaproteobacteria</taxon>
        <taxon>Enterobacterales</taxon>
        <taxon>Enterobacteriaceae</taxon>
        <taxon>Shigella</taxon>
    </lineage>
</organism>
<protein>
    <recommendedName>
        <fullName evidence="1">Maltose/maltodextrin transport system permease protein MalF</fullName>
    </recommendedName>
</protein>
<sequence length="514" mass="57029">MDVIKKKHWWQSDALKWSVLGLLGLLVGYLVVLMYAQGEYLFAITTLILSSAGLYIFANRKAYAWRYVYPGMAGMGLFVLFPLVCTIAIAFTNYSSTNQLTFERAQEVLLDRSWQAGKTYNFGLYPAGDEWQLALSDGETGKNYLSDAFKFGGEQKLQLKETTAQPEGERANLRVITQNRQALSDITAILPDGNKVMMSSLRQFSGTQPLYTLDGDGTLTNNQSGVKYRPNNQIGFYQSITADGNWGDEKLSPGYTVTTGWKNFTRVFTDEGIQKPFLAIFVWTVVFSLITVFLTVAVGMVLACLVQWEALRGKAVYRVLLILPYAVPSFISILIFKGLFNQSFGEINMMLSALFGVKPAWFSDPTTARTMLIIVNTWLGYPYMMILCMGLLKAIPDDLYEASAMDGAGLFQNFFKITLPLLIKPLTPLMIASFAFNFNNFVLIQLLTNGGPDRLGTTTPAGYTDLLVNYTYRIAFEGGGGQDFGLAAAIATLIFLLVGALAIVNLKATRMKFD</sequence>
<gene>
    <name type="primary">malF</name>
    <name type="ordered locus">SF4172</name>
    <name type="ordered locus">S3559</name>
</gene>
<evidence type="ECO:0000250" key="1">
    <source>
        <dbReference type="UniProtKB" id="P02916"/>
    </source>
</evidence>
<evidence type="ECO:0000255" key="2"/>
<evidence type="ECO:0000255" key="3">
    <source>
        <dbReference type="PROSITE-ProRule" id="PRU00441"/>
    </source>
</evidence>
<evidence type="ECO:0000305" key="4"/>
<name>MALF_SHIFL</name>
<comment type="function">
    <text evidence="1">Part of the ABC transporter complex MalEFGK involved in maltose/maltodextrin import. Probably responsible for the translocation of the substrate across the membrane.</text>
</comment>
<comment type="subunit">
    <text evidence="1">The complex is composed of two ATP-binding proteins (MalK), two transmembrane proteins (MalG and MalF) and a solute-binding protein (MalE).</text>
</comment>
<comment type="subcellular location">
    <subcellularLocation>
        <location evidence="1">Cell inner membrane</location>
        <topology evidence="1">Multi-pass membrane protein</topology>
    </subcellularLocation>
</comment>
<comment type="similarity">
    <text evidence="4">Belongs to the binding-protein-dependent transport system permease family. MalFG subfamily.</text>
</comment>
<keyword id="KW-0997">Cell inner membrane</keyword>
<keyword id="KW-1003">Cell membrane</keyword>
<keyword id="KW-0472">Membrane</keyword>
<keyword id="KW-1185">Reference proteome</keyword>
<keyword id="KW-0762">Sugar transport</keyword>
<keyword id="KW-0812">Transmembrane</keyword>
<keyword id="KW-1133">Transmembrane helix</keyword>
<keyword id="KW-0813">Transport</keyword>
<feature type="chain" id="PRO_0000060075" description="Maltose/maltodextrin transport system permease protein MalF">
    <location>
        <begin position="1"/>
        <end position="514"/>
    </location>
</feature>
<feature type="topological domain" description="Cytoplasmic" evidence="2">
    <location>
        <begin position="1"/>
        <end position="13"/>
    </location>
</feature>
<feature type="transmembrane region" description="Helical" evidence="3">
    <location>
        <begin position="14"/>
        <end position="34"/>
    </location>
</feature>
<feature type="topological domain" description="Periplasmic" evidence="2">
    <location>
        <begin position="35"/>
        <end position="37"/>
    </location>
</feature>
<feature type="transmembrane region" description="Helical" evidence="3">
    <location>
        <begin position="38"/>
        <end position="58"/>
    </location>
</feature>
<feature type="topological domain" description="Cytoplasmic" evidence="2">
    <location>
        <begin position="59"/>
        <end position="70"/>
    </location>
</feature>
<feature type="transmembrane region" description="Helical" evidence="3">
    <location>
        <begin position="71"/>
        <end position="91"/>
    </location>
</feature>
<feature type="topological domain" description="Periplasmic" evidence="2">
    <location>
        <begin position="92"/>
        <end position="276"/>
    </location>
</feature>
<feature type="transmembrane region" description="Helical" evidence="3">
    <location>
        <begin position="277"/>
        <end position="297"/>
    </location>
</feature>
<feature type="topological domain" description="Cytoplasmic" evidence="2">
    <location>
        <begin position="298"/>
        <end position="319"/>
    </location>
</feature>
<feature type="transmembrane region" description="Helical" evidence="3">
    <location>
        <begin position="320"/>
        <end position="340"/>
    </location>
</feature>
<feature type="topological domain" description="Periplasmic" evidence="2">
    <location>
        <begin position="341"/>
        <end position="371"/>
    </location>
</feature>
<feature type="transmembrane region" description="Helical" evidence="3">
    <location>
        <begin position="372"/>
        <end position="392"/>
    </location>
</feature>
<feature type="topological domain" description="Cytoplasmic" evidence="2">
    <location>
        <begin position="393"/>
        <end position="416"/>
    </location>
</feature>
<feature type="transmembrane region" description="Helical" evidence="3">
    <location>
        <begin position="417"/>
        <end position="437"/>
    </location>
</feature>
<feature type="topological domain" description="Periplasmic" evidence="2">
    <location>
        <begin position="438"/>
        <end position="483"/>
    </location>
</feature>
<feature type="transmembrane region" description="Helical" evidence="3">
    <location>
        <begin position="484"/>
        <end position="504"/>
    </location>
</feature>
<feature type="topological domain" description="Cytoplasmic" evidence="2">
    <location>
        <begin position="505"/>
        <end position="514"/>
    </location>
</feature>
<feature type="domain" description="ABC transmembrane type-1" evidence="3">
    <location>
        <begin position="281"/>
        <end position="505"/>
    </location>
</feature>
<feature type="sequence conflict" description="In Ref. 2; AAP18606." evidence="4" ref="2">
    <original>L</original>
    <variation>P</variation>
    <location>
        <position position="410"/>
    </location>
</feature>